<reference key="1">
    <citation type="journal article" date="2010" name="Genome Biol. Evol.">
        <title>Continuing evolution of Burkholderia mallei through genome reduction and large-scale rearrangements.</title>
        <authorList>
            <person name="Losada L."/>
            <person name="Ronning C.M."/>
            <person name="DeShazer D."/>
            <person name="Woods D."/>
            <person name="Fedorova N."/>
            <person name="Kim H.S."/>
            <person name="Shabalina S.A."/>
            <person name="Pearson T.R."/>
            <person name="Brinkac L."/>
            <person name="Tan P."/>
            <person name="Nandi T."/>
            <person name="Crabtree J."/>
            <person name="Badger J."/>
            <person name="Beckstrom-Sternberg S."/>
            <person name="Saqib M."/>
            <person name="Schutzer S.E."/>
            <person name="Keim P."/>
            <person name="Nierman W.C."/>
        </authorList>
    </citation>
    <scope>NUCLEOTIDE SEQUENCE [LARGE SCALE GENOMIC DNA]</scope>
    <source>
        <strain>1106a</strain>
    </source>
</reference>
<accession>A3NSK8</accession>
<comment type="function">
    <text evidence="1">Catalyzes the condensation of pantoate with beta-alanine in an ATP-dependent reaction via a pantoyl-adenylate intermediate.</text>
</comment>
<comment type="catalytic activity">
    <reaction evidence="1">
        <text>(R)-pantoate + beta-alanine + ATP = (R)-pantothenate + AMP + diphosphate + H(+)</text>
        <dbReference type="Rhea" id="RHEA:10912"/>
        <dbReference type="ChEBI" id="CHEBI:15378"/>
        <dbReference type="ChEBI" id="CHEBI:15980"/>
        <dbReference type="ChEBI" id="CHEBI:29032"/>
        <dbReference type="ChEBI" id="CHEBI:30616"/>
        <dbReference type="ChEBI" id="CHEBI:33019"/>
        <dbReference type="ChEBI" id="CHEBI:57966"/>
        <dbReference type="ChEBI" id="CHEBI:456215"/>
        <dbReference type="EC" id="6.3.2.1"/>
    </reaction>
</comment>
<comment type="pathway">
    <text evidence="1">Cofactor biosynthesis; (R)-pantothenate biosynthesis; (R)-pantothenate from (R)-pantoate and beta-alanine: step 1/1.</text>
</comment>
<comment type="subunit">
    <text evidence="1">Homodimer.</text>
</comment>
<comment type="subcellular location">
    <subcellularLocation>
        <location evidence="1">Cytoplasm</location>
    </subcellularLocation>
</comment>
<comment type="miscellaneous">
    <text evidence="1">The reaction proceeds by a bi uni uni bi ping pong mechanism.</text>
</comment>
<comment type="similarity">
    <text evidence="1">Belongs to the pantothenate synthetase family.</text>
</comment>
<feature type="chain" id="PRO_0000305415" description="Pantothenate synthetase">
    <location>
        <begin position="1"/>
        <end position="279"/>
    </location>
</feature>
<feature type="active site" description="Proton donor" evidence="1">
    <location>
        <position position="33"/>
    </location>
</feature>
<feature type="binding site" evidence="1">
    <location>
        <begin position="26"/>
        <end position="33"/>
    </location>
    <ligand>
        <name>ATP</name>
        <dbReference type="ChEBI" id="CHEBI:30616"/>
    </ligand>
</feature>
<feature type="binding site" evidence="1">
    <location>
        <position position="57"/>
    </location>
    <ligand>
        <name>(R)-pantoate</name>
        <dbReference type="ChEBI" id="CHEBI:15980"/>
    </ligand>
</feature>
<feature type="binding site" evidence="1">
    <location>
        <position position="57"/>
    </location>
    <ligand>
        <name>beta-alanine</name>
        <dbReference type="ChEBI" id="CHEBI:57966"/>
    </ligand>
</feature>
<feature type="binding site" evidence="1">
    <location>
        <begin position="144"/>
        <end position="147"/>
    </location>
    <ligand>
        <name>ATP</name>
        <dbReference type="ChEBI" id="CHEBI:30616"/>
    </ligand>
</feature>
<feature type="binding site" evidence="1">
    <location>
        <position position="150"/>
    </location>
    <ligand>
        <name>(R)-pantoate</name>
        <dbReference type="ChEBI" id="CHEBI:15980"/>
    </ligand>
</feature>
<feature type="binding site" evidence="1">
    <location>
        <position position="173"/>
    </location>
    <ligand>
        <name>ATP</name>
        <dbReference type="ChEBI" id="CHEBI:30616"/>
    </ligand>
</feature>
<feature type="binding site" evidence="1">
    <location>
        <begin position="181"/>
        <end position="184"/>
    </location>
    <ligand>
        <name>ATP</name>
        <dbReference type="ChEBI" id="CHEBI:30616"/>
    </ligand>
</feature>
<keyword id="KW-0067">ATP-binding</keyword>
<keyword id="KW-0963">Cytoplasm</keyword>
<keyword id="KW-0436">Ligase</keyword>
<keyword id="KW-0547">Nucleotide-binding</keyword>
<keyword id="KW-0566">Pantothenate biosynthesis</keyword>
<name>PANC_BURP0</name>
<organism>
    <name type="scientific">Burkholderia pseudomallei (strain 1106a)</name>
    <dbReference type="NCBI Taxonomy" id="357348"/>
    <lineage>
        <taxon>Bacteria</taxon>
        <taxon>Pseudomonadati</taxon>
        <taxon>Pseudomonadota</taxon>
        <taxon>Betaproteobacteria</taxon>
        <taxon>Burkholderiales</taxon>
        <taxon>Burkholderiaceae</taxon>
        <taxon>Burkholderia</taxon>
        <taxon>pseudomallei group</taxon>
    </lineage>
</organism>
<evidence type="ECO:0000255" key="1">
    <source>
        <dbReference type="HAMAP-Rule" id="MF_00158"/>
    </source>
</evidence>
<dbReference type="EC" id="6.3.2.1" evidence="1"/>
<dbReference type="EMBL" id="CP000572">
    <property type="protein sequence ID" value="ABN89348.1"/>
    <property type="molecule type" value="Genomic_DNA"/>
</dbReference>
<dbReference type="RefSeq" id="WP_004192993.1">
    <property type="nucleotide sequence ID" value="NC_009076.1"/>
</dbReference>
<dbReference type="SMR" id="A3NSK8"/>
<dbReference type="GeneID" id="93059491"/>
<dbReference type="KEGG" id="bpl:BURPS1106A_1049"/>
<dbReference type="HOGENOM" id="CLU_047148_0_0_4"/>
<dbReference type="UniPathway" id="UPA00028">
    <property type="reaction ID" value="UER00005"/>
</dbReference>
<dbReference type="Proteomes" id="UP000006738">
    <property type="component" value="Chromosome I"/>
</dbReference>
<dbReference type="GO" id="GO:0005829">
    <property type="term" value="C:cytosol"/>
    <property type="evidence" value="ECO:0007669"/>
    <property type="project" value="TreeGrafter"/>
</dbReference>
<dbReference type="GO" id="GO:0005524">
    <property type="term" value="F:ATP binding"/>
    <property type="evidence" value="ECO:0007669"/>
    <property type="project" value="UniProtKB-KW"/>
</dbReference>
<dbReference type="GO" id="GO:0004592">
    <property type="term" value="F:pantoate-beta-alanine ligase activity"/>
    <property type="evidence" value="ECO:0007669"/>
    <property type="project" value="UniProtKB-UniRule"/>
</dbReference>
<dbReference type="GO" id="GO:0015940">
    <property type="term" value="P:pantothenate biosynthetic process"/>
    <property type="evidence" value="ECO:0007669"/>
    <property type="project" value="UniProtKB-UniRule"/>
</dbReference>
<dbReference type="CDD" id="cd00560">
    <property type="entry name" value="PanC"/>
    <property type="match status" value="1"/>
</dbReference>
<dbReference type="Gene3D" id="3.40.50.620">
    <property type="entry name" value="HUPs"/>
    <property type="match status" value="1"/>
</dbReference>
<dbReference type="Gene3D" id="3.30.1300.10">
    <property type="entry name" value="Pantoate-beta-alanine ligase, C-terminal domain"/>
    <property type="match status" value="1"/>
</dbReference>
<dbReference type="HAMAP" id="MF_00158">
    <property type="entry name" value="PanC"/>
    <property type="match status" value="1"/>
</dbReference>
<dbReference type="InterPro" id="IPR004821">
    <property type="entry name" value="Cyt_trans-like"/>
</dbReference>
<dbReference type="InterPro" id="IPR003721">
    <property type="entry name" value="Pantoate_ligase"/>
</dbReference>
<dbReference type="InterPro" id="IPR042176">
    <property type="entry name" value="Pantoate_ligase_C"/>
</dbReference>
<dbReference type="InterPro" id="IPR014729">
    <property type="entry name" value="Rossmann-like_a/b/a_fold"/>
</dbReference>
<dbReference type="NCBIfam" id="TIGR00125">
    <property type="entry name" value="cyt_tran_rel"/>
    <property type="match status" value="1"/>
</dbReference>
<dbReference type="NCBIfam" id="TIGR00018">
    <property type="entry name" value="panC"/>
    <property type="match status" value="1"/>
</dbReference>
<dbReference type="PANTHER" id="PTHR21299">
    <property type="entry name" value="CYTIDYLATE KINASE/PANTOATE-BETA-ALANINE LIGASE"/>
    <property type="match status" value="1"/>
</dbReference>
<dbReference type="PANTHER" id="PTHR21299:SF1">
    <property type="entry name" value="PANTOATE--BETA-ALANINE LIGASE"/>
    <property type="match status" value="1"/>
</dbReference>
<dbReference type="Pfam" id="PF02569">
    <property type="entry name" value="Pantoate_ligase"/>
    <property type="match status" value="1"/>
</dbReference>
<dbReference type="SUPFAM" id="SSF52374">
    <property type="entry name" value="Nucleotidylyl transferase"/>
    <property type="match status" value="1"/>
</dbReference>
<gene>
    <name evidence="1" type="primary">panC</name>
    <name type="ordered locus">BURPS1106A_1049</name>
</gene>
<protein>
    <recommendedName>
        <fullName evidence="1">Pantothenate synthetase</fullName>
        <shortName evidence="1">PS</shortName>
        <ecNumber evidence="1">6.3.2.1</ecNumber>
    </recommendedName>
    <alternativeName>
        <fullName evidence="1">Pantoate--beta-alanine ligase</fullName>
    </alternativeName>
    <alternativeName>
        <fullName evidence="1">Pantoate-activating enzyme</fullName>
    </alternativeName>
</protein>
<proteinExistence type="inferred from homology"/>
<sequence length="279" mass="31207">MKVISSIQELRDQLRGQNRTAFVPTMGNLHDGHLSLMRLARQHGDPVVASIFVNRLQFGPNEDFDQYPRTLQDDIEKLQKENVYVLFAPTERDMYPEPQEYRVQPPHDLGDILEGEFRPGFFTGVCTVVTKLMACVQPRVAVFGKKDYQQLMIVRRMCQQLALPVEIIAAETVRDADGLALSSRNRYLSEAERAEAPELAKTLAQVRSAVLGGERDLAAIEQRALAHLAARGWKPDYVSIRRRANLVAPSAAHIEAGEPLVVLTAAKLGATRLIDNLEI</sequence>